<proteinExistence type="inferred from homology"/>
<sequence>MITIRIGTRPSRLAVRQAEIVASAIRHAGYEVEIVKYRSEGDSDLKSPLYSIGKTGVFVERLNSLILSGDIDAAVHSAKDIPYEIDRRLRISAVMPRGRFEDALVSENPLSKLPPGSVIGTSSLRRRYQILYQRKDVKVSNIRGNVDTRIEKMRSEGMAGIVMALAAIDRLELNLRYWPFDPEKFVPAPNQGIIAVVSEDGSKASEVLSSINDADTYDDMMAERSITQGLKLGCSTPVGILSRHTGKGMRILAQFFAMDGSDMMMFDQHVDGLDDVDGIVSYIRENLPEEYGYKL</sequence>
<reference key="1">
    <citation type="journal article" date="2000" name="Nature">
        <title>The genome sequence of the thermoacidophilic scavenger Thermoplasma acidophilum.</title>
        <authorList>
            <person name="Ruepp A."/>
            <person name="Graml W."/>
            <person name="Santos-Martinez M.-L."/>
            <person name="Koretke K.K."/>
            <person name="Volker C."/>
            <person name="Mewes H.-W."/>
            <person name="Frishman D."/>
            <person name="Stocker S."/>
            <person name="Lupas A.N."/>
            <person name="Baumeister W."/>
        </authorList>
    </citation>
    <scope>NUCLEOTIDE SEQUENCE [LARGE SCALE GENOMIC DNA]</scope>
    <source>
        <strain>ATCC 25905 / DSM 1728 / JCM 9062 / NBRC 15155 / AMRC-C165</strain>
    </source>
</reference>
<feature type="chain" id="PRO_0000143032" description="Probable porphobilinogen deaminase">
    <location>
        <begin position="1"/>
        <end position="295"/>
    </location>
</feature>
<feature type="modified residue" description="S-(dipyrrolylmethanemethyl)cysteine" evidence="1">
    <location>
        <position position="234"/>
    </location>
</feature>
<dbReference type="EC" id="2.5.1.61"/>
<dbReference type="EMBL" id="AL445064">
    <property type="protein sequence ID" value="CAC11712.1"/>
    <property type="molecule type" value="Genomic_DNA"/>
</dbReference>
<dbReference type="RefSeq" id="WP_010900997.1">
    <property type="nucleotide sequence ID" value="NC_002578.1"/>
</dbReference>
<dbReference type="SMR" id="Q9HKM5"/>
<dbReference type="FunCoup" id="Q9HKM5">
    <property type="interactions" value="196"/>
</dbReference>
<dbReference type="STRING" id="273075.gene:9571792"/>
<dbReference type="PaxDb" id="273075-Ta0572"/>
<dbReference type="EnsemblBacteria" id="CAC11712">
    <property type="protein sequence ID" value="CAC11712"/>
    <property type="gene ID" value="CAC11712"/>
</dbReference>
<dbReference type="KEGG" id="tac:Ta0572"/>
<dbReference type="eggNOG" id="arCOG04299">
    <property type="taxonomic scope" value="Archaea"/>
</dbReference>
<dbReference type="HOGENOM" id="CLU_019704_1_0_2"/>
<dbReference type="InParanoid" id="Q9HKM5"/>
<dbReference type="OrthoDB" id="8042at2157"/>
<dbReference type="UniPathway" id="UPA00251">
    <property type="reaction ID" value="UER00319"/>
</dbReference>
<dbReference type="Proteomes" id="UP000001024">
    <property type="component" value="Chromosome"/>
</dbReference>
<dbReference type="GO" id="GO:0005737">
    <property type="term" value="C:cytoplasm"/>
    <property type="evidence" value="ECO:0007669"/>
    <property type="project" value="TreeGrafter"/>
</dbReference>
<dbReference type="GO" id="GO:0004418">
    <property type="term" value="F:hydroxymethylbilane synthase activity"/>
    <property type="evidence" value="ECO:0007669"/>
    <property type="project" value="UniProtKB-UniRule"/>
</dbReference>
<dbReference type="GO" id="GO:0006782">
    <property type="term" value="P:protoporphyrinogen IX biosynthetic process"/>
    <property type="evidence" value="ECO:0007669"/>
    <property type="project" value="UniProtKB-UniRule"/>
</dbReference>
<dbReference type="CDD" id="cd13644">
    <property type="entry name" value="PBP2_HemC_archaea"/>
    <property type="match status" value="1"/>
</dbReference>
<dbReference type="FunFam" id="3.40.190.10:FF:000005">
    <property type="entry name" value="Porphobilinogen deaminase"/>
    <property type="match status" value="1"/>
</dbReference>
<dbReference type="Gene3D" id="3.40.190.10">
    <property type="entry name" value="Periplasmic binding protein-like II"/>
    <property type="match status" value="2"/>
</dbReference>
<dbReference type="Gene3D" id="3.30.160.40">
    <property type="entry name" value="Porphobilinogen deaminase, C-terminal domain"/>
    <property type="match status" value="1"/>
</dbReference>
<dbReference type="HAMAP" id="MF_00260">
    <property type="entry name" value="Porphobil_deam"/>
    <property type="match status" value="1"/>
</dbReference>
<dbReference type="InterPro" id="IPR000860">
    <property type="entry name" value="HemC"/>
</dbReference>
<dbReference type="InterPro" id="IPR022419">
    <property type="entry name" value="Porphobilin_deaminase_cofac_BS"/>
</dbReference>
<dbReference type="InterPro" id="IPR022417">
    <property type="entry name" value="Porphobilin_deaminase_N"/>
</dbReference>
<dbReference type="InterPro" id="IPR036803">
    <property type="entry name" value="Porphobilinogen_deaminase_C_sf"/>
</dbReference>
<dbReference type="NCBIfam" id="TIGR00212">
    <property type="entry name" value="hemC"/>
    <property type="match status" value="1"/>
</dbReference>
<dbReference type="PANTHER" id="PTHR11557">
    <property type="entry name" value="PORPHOBILINOGEN DEAMINASE"/>
    <property type="match status" value="1"/>
</dbReference>
<dbReference type="PANTHER" id="PTHR11557:SF0">
    <property type="entry name" value="PORPHOBILINOGEN DEAMINASE"/>
    <property type="match status" value="1"/>
</dbReference>
<dbReference type="Pfam" id="PF01379">
    <property type="entry name" value="Porphobil_deam"/>
    <property type="match status" value="1"/>
</dbReference>
<dbReference type="PIRSF" id="PIRSF001438">
    <property type="entry name" value="4pyrrol_synth_OHMeBilane_synth"/>
    <property type="match status" value="1"/>
</dbReference>
<dbReference type="PRINTS" id="PR00151">
    <property type="entry name" value="PORPHBDMNASE"/>
</dbReference>
<dbReference type="SUPFAM" id="SSF53850">
    <property type="entry name" value="Periplasmic binding protein-like II"/>
    <property type="match status" value="1"/>
</dbReference>
<dbReference type="SUPFAM" id="SSF54782">
    <property type="entry name" value="Porphobilinogen deaminase (hydroxymethylbilane synthase), C-terminal domain"/>
    <property type="match status" value="1"/>
</dbReference>
<dbReference type="PROSITE" id="PS00533">
    <property type="entry name" value="PORPHOBILINOGEN_DEAM"/>
    <property type="match status" value="1"/>
</dbReference>
<accession>Q9HKM5</accession>
<name>HEM3_THEAC</name>
<organism>
    <name type="scientific">Thermoplasma acidophilum (strain ATCC 25905 / DSM 1728 / JCM 9062 / NBRC 15155 / AMRC-C165)</name>
    <dbReference type="NCBI Taxonomy" id="273075"/>
    <lineage>
        <taxon>Archaea</taxon>
        <taxon>Methanobacteriati</taxon>
        <taxon>Thermoplasmatota</taxon>
        <taxon>Thermoplasmata</taxon>
        <taxon>Thermoplasmatales</taxon>
        <taxon>Thermoplasmataceae</taxon>
        <taxon>Thermoplasma</taxon>
    </lineage>
</organism>
<comment type="function">
    <text evidence="1">Tetrapolymerization of the monopyrrole PBG into the hydroxymethylbilane pre-uroporphyrinogen in several discrete steps.</text>
</comment>
<comment type="catalytic activity">
    <reaction>
        <text>4 porphobilinogen + H2O = hydroxymethylbilane + 4 NH4(+)</text>
        <dbReference type="Rhea" id="RHEA:13185"/>
        <dbReference type="ChEBI" id="CHEBI:15377"/>
        <dbReference type="ChEBI" id="CHEBI:28938"/>
        <dbReference type="ChEBI" id="CHEBI:57845"/>
        <dbReference type="ChEBI" id="CHEBI:58126"/>
        <dbReference type="EC" id="2.5.1.61"/>
    </reaction>
</comment>
<comment type="cofactor">
    <cofactor evidence="1">
        <name>dipyrromethane</name>
        <dbReference type="ChEBI" id="CHEBI:60342"/>
    </cofactor>
    <text evidence="1">Binds 1 dipyrromethane group covalently.</text>
</comment>
<comment type="pathway">
    <text>Porphyrin-containing compound metabolism; protoporphyrin-IX biosynthesis; coproporphyrinogen-III from 5-aminolevulinate: step 2/4.</text>
</comment>
<comment type="miscellaneous">
    <text evidence="1">The porphobilinogen subunits are added to the dipyrromethane group.</text>
</comment>
<comment type="similarity">
    <text evidence="2">Belongs to the HMBS family.</text>
</comment>
<evidence type="ECO:0000250" key="1"/>
<evidence type="ECO:0000305" key="2"/>
<protein>
    <recommendedName>
        <fullName>Probable porphobilinogen deaminase</fullName>
        <shortName>PBG</shortName>
        <ecNumber>2.5.1.61</ecNumber>
    </recommendedName>
    <alternativeName>
        <fullName>Hydroxymethylbilane synthase</fullName>
        <shortName>HMBS</shortName>
    </alternativeName>
    <alternativeName>
        <fullName>Pre-uroporphyrinogen synthase</fullName>
    </alternativeName>
</protein>
<gene>
    <name type="primary">hemC</name>
    <name type="ordered locus">Ta0572</name>
</gene>
<keyword id="KW-0627">Porphyrin biosynthesis</keyword>
<keyword id="KW-1185">Reference proteome</keyword>
<keyword id="KW-0808">Transferase</keyword>